<proteinExistence type="evidence at protein level"/>
<name>PSAK_CHLRE</name>
<dbReference type="EMBL" id="X15166">
    <property type="protein sequence ID" value="CAA33258.1"/>
    <property type="molecule type" value="mRNA"/>
</dbReference>
<dbReference type="PIR" id="JQ0372">
    <property type="entry name" value="S06684"/>
</dbReference>
<dbReference type="RefSeq" id="XP_001697230.1">
    <property type="nucleotide sequence ID" value="XM_001697178.1"/>
</dbReference>
<dbReference type="PDB" id="6IJJ">
    <property type="method" value="EM"/>
    <property type="resolution" value="2.89 A"/>
    <property type="chains" value="K=1-113"/>
</dbReference>
<dbReference type="PDB" id="6IJO">
    <property type="method" value="EM"/>
    <property type="resolution" value="3.30 A"/>
    <property type="chains" value="K=1-113"/>
</dbReference>
<dbReference type="PDB" id="6JO5">
    <property type="method" value="EM"/>
    <property type="resolution" value="2.90 A"/>
    <property type="chains" value="K=27-113"/>
</dbReference>
<dbReference type="PDB" id="6JO6">
    <property type="method" value="EM"/>
    <property type="resolution" value="2.90 A"/>
    <property type="chains" value="K=27-113"/>
</dbReference>
<dbReference type="PDB" id="7BGI">
    <property type="method" value="EM"/>
    <property type="resolution" value="2.54 A"/>
    <property type="chains" value="K=29-112"/>
</dbReference>
<dbReference type="PDB" id="7BLX">
    <property type="method" value="EM"/>
    <property type="resolution" value="3.15 A"/>
    <property type="chains" value="K=29-112"/>
</dbReference>
<dbReference type="PDB" id="7D0J">
    <property type="method" value="EM"/>
    <property type="resolution" value="3.42 A"/>
    <property type="chains" value="K=29-113"/>
</dbReference>
<dbReference type="PDB" id="7DZ7">
    <property type="method" value="EM"/>
    <property type="resolution" value="2.84 A"/>
    <property type="chains" value="K=1-113"/>
</dbReference>
<dbReference type="PDB" id="7DZ8">
    <property type="method" value="EM"/>
    <property type="resolution" value="3.16 A"/>
    <property type="chains" value="K=1-113"/>
</dbReference>
<dbReference type="PDB" id="7O01">
    <property type="method" value="EM"/>
    <property type="resolution" value="17.10 A"/>
    <property type="chains" value="K/k=29-112"/>
</dbReference>
<dbReference type="PDB" id="7R3K">
    <property type="method" value="EM"/>
    <property type="resolution" value="2.52 A"/>
    <property type="chains" value="K=1-113"/>
</dbReference>
<dbReference type="PDB" id="7ZQ9">
    <property type="method" value="EM"/>
    <property type="resolution" value="2.74 A"/>
    <property type="chains" value="K=1-113"/>
</dbReference>
<dbReference type="PDB" id="7ZQC">
    <property type="method" value="EM"/>
    <property type="resolution" value="2.31 A"/>
    <property type="chains" value="K=1-113"/>
</dbReference>
<dbReference type="PDB" id="7ZQD">
    <property type="method" value="EM"/>
    <property type="resolution" value="2.97 A"/>
    <property type="chains" value="K/K2=1-113"/>
</dbReference>
<dbReference type="PDB" id="8H2U">
    <property type="method" value="X-ray"/>
    <property type="resolution" value="3.40 A"/>
    <property type="chains" value="K=1-113"/>
</dbReference>
<dbReference type="PDBsum" id="6IJJ"/>
<dbReference type="PDBsum" id="6IJO"/>
<dbReference type="PDBsum" id="6JO5"/>
<dbReference type="PDBsum" id="6JO6"/>
<dbReference type="PDBsum" id="7BGI"/>
<dbReference type="PDBsum" id="7BLX"/>
<dbReference type="PDBsum" id="7D0J"/>
<dbReference type="PDBsum" id="7DZ7"/>
<dbReference type="PDBsum" id="7DZ8"/>
<dbReference type="PDBsum" id="7O01"/>
<dbReference type="PDBsum" id="7R3K"/>
<dbReference type="PDBsum" id="7ZQ9"/>
<dbReference type="PDBsum" id="7ZQC"/>
<dbReference type="PDBsum" id="7ZQD"/>
<dbReference type="PDBsum" id="8H2U"/>
<dbReference type="EMDB" id="EMD-12180"/>
<dbReference type="EMDB" id="EMD-12227"/>
<dbReference type="EMDB" id="EMD-12672"/>
<dbReference type="EMDB" id="EMD-14248"/>
<dbReference type="EMDB" id="EMD-14867"/>
<dbReference type="EMDB" id="EMD-14870"/>
<dbReference type="EMDB" id="EMD-14871"/>
<dbReference type="EMDB" id="EMD-30536"/>
<dbReference type="EMDB" id="EMD-30925"/>
<dbReference type="EMDB" id="EMD-30926"/>
<dbReference type="EMDB" id="EMD-9678"/>
<dbReference type="EMDB" id="EMD-9680"/>
<dbReference type="EMDB" id="EMD-9853"/>
<dbReference type="EMDB" id="EMD-9854"/>
<dbReference type="SMR" id="P14225"/>
<dbReference type="IntAct" id="P14225">
    <property type="interactions" value="1"/>
</dbReference>
<dbReference type="PaxDb" id="3055-EDP00485"/>
<dbReference type="EnsemblPlants" id="PNW70544">
    <property type="protein sequence ID" value="PNW70544"/>
    <property type="gene ID" value="CHLRE_17g724300v5"/>
</dbReference>
<dbReference type="Gramene" id="PNW70544">
    <property type="protein sequence ID" value="PNW70544"/>
    <property type="gene ID" value="CHLRE_17g724300v5"/>
</dbReference>
<dbReference type="KEGG" id="cre:CHLRE_17g724300v5"/>
<dbReference type="eggNOG" id="ENOG502RZHF">
    <property type="taxonomic scope" value="Eukaryota"/>
</dbReference>
<dbReference type="HOGENOM" id="CLU_158886_0_0_1"/>
<dbReference type="OMA" id="IVHTKAK"/>
<dbReference type="OrthoDB" id="1904255at2759"/>
<dbReference type="BioCyc" id="CHLAMY:CHLREDRAFT_192478-MONOMER"/>
<dbReference type="BioCyc" id="MetaCyc:CHLREDRAFT_192478-MONOMER"/>
<dbReference type="GO" id="GO:0009535">
    <property type="term" value="C:chloroplast thylakoid membrane"/>
    <property type="evidence" value="ECO:0007669"/>
    <property type="project" value="UniProtKB-SubCell"/>
</dbReference>
<dbReference type="GO" id="GO:0009522">
    <property type="term" value="C:photosystem I"/>
    <property type="evidence" value="ECO:0007669"/>
    <property type="project" value="UniProtKB-KW"/>
</dbReference>
<dbReference type="GO" id="GO:0015979">
    <property type="term" value="P:photosynthesis"/>
    <property type="evidence" value="ECO:0007669"/>
    <property type="project" value="UniProtKB-KW"/>
</dbReference>
<dbReference type="Gene3D" id="1.10.286.40">
    <property type="entry name" value="Chlorophyll a-b binding protein like"/>
    <property type="match status" value="1"/>
</dbReference>
<dbReference type="InterPro" id="IPR000549">
    <property type="entry name" value="PSI_PsaG/PsaK"/>
</dbReference>
<dbReference type="InterPro" id="IPR023618">
    <property type="entry name" value="PSI_PsaG/PsaK_dom"/>
</dbReference>
<dbReference type="InterPro" id="IPR016370">
    <property type="entry name" value="PSI_PsaG/PsaK_pln"/>
</dbReference>
<dbReference type="InterPro" id="IPR017493">
    <property type="entry name" value="PSI_PsaK_pln"/>
</dbReference>
<dbReference type="NCBIfam" id="TIGR03050">
    <property type="entry name" value="PS_I_psaK_plant"/>
    <property type="match status" value="1"/>
</dbReference>
<dbReference type="PANTHER" id="PTHR34195:SF2">
    <property type="entry name" value="PHOTOSYSTEM I REACTION CENTER SUBUNIT PSAK, CHLOROPLASTIC"/>
    <property type="match status" value="1"/>
</dbReference>
<dbReference type="PANTHER" id="PTHR34195">
    <property type="entry name" value="PHOTOSYSTEM I REACTION CENTER SUBUNIT V, CHLOROPLASTIC-RELATED"/>
    <property type="match status" value="1"/>
</dbReference>
<dbReference type="Pfam" id="PF01241">
    <property type="entry name" value="PSI_PSAK"/>
    <property type="match status" value="1"/>
</dbReference>
<dbReference type="PROSITE" id="PS01026">
    <property type="entry name" value="PHOTOSYSTEM_I_PSAGK"/>
    <property type="match status" value="1"/>
</dbReference>
<accession>P14225</accession>
<sequence>MQALATRPSAIRPTKAARRSSVVVRADGFIGSSTNLIMVASTTATLAAARFGLAPTVKKNTTAGLKLVDSKNSAGVISNDPAGFTIVDVLAMGAAGHGLGVGIVLGLKGIGAL</sequence>
<keyword id="KW-0002">3D-structure</keyword>
<keyword id="KW-0150">Chloroplast</keyword>
<keyword id="KW-0472">Membrane</keyword>
<keyword id="KW-0602">Photosynthesis</keyword>
<keyword id="KW-0603">Photosystem I</keyword>
<keyword id="KW-0934">Plastid</keyword>
<keyword id="KW-0793">Thylakoid</keyword>
<keyword id="KW-0809">Transit peptide</keyword>
<keyword id="KW-0812">Transmembrane</keyword>
<keyword id="KW-1133">Transmembrane helix</keyword>
<organism>
    <name type="scientific">Chlamydomonas reinhardtii</name>
    <name type="common">Chlamydomonas smithii</name>
    <dbReference type="NCBI Taxonomy" id="3055"/>
    <lineage>
        <taxon>Eukaryota</taxon>
        <taxon>Viridiplantae</taxon>
        <taxon>Chlorophyta</taxon>
        <taxon>core chlorophytes</taxon>
        <taxon>Chlorophyceae</taxon>
        <taxon>CS clade</taxon>
        <taxon>Chlamydomonadales</taxon>
        <taxon>Chlamydomonadaceae</taxon>
        <taxon>Chlamydomonas</taxon>
    </lineage>
</organism>
<protein>
    <recommendedName>
        <fullName>Photosystem I reaction center subunit psaK, chloroplastic</fullName>
    </recommendedName>
    <alternativeName>
        <fullName>Light-harvesting complex I 8.4 kDa protein</fullName>
    </alternativeName>
    <alternativeName>
        <fullName>P37 protein</fullName>
    </alternativeName>
    <alternativeName>
        <fullName>PSI-K</fullName>
    </alternativeName>
    <alternativeName>
        <fullName>Photosystem I subunit X</fullName>
    </alternativeName>
</protein>
<feature type="transit peptide" description="Chloroplast">
    <location>
        <begin position="1"/>
        <end position="26"/>
    </location>
</feature>
<feature type="chain" id="PRO_0000029393" description="Photosystem I reaction center subunit psaK, chloroplastic">
    <location>
        <begin position="27"/>
        <end position="113"/>
    </location>
</feature>
<feature type="transmembrane region" description="Helical" evidence="2">
    <location>
        <begin position="29"/>
        <end position="49"/>
    </location>
</feature>
<feature type="transmembrane region" description="Helical" evidence="2">
    <location>
        <begin position="86"/>
        <end position="107"/>
    </location>
</feature>
<feature type="helix" evidence="6">
    <location>
        <begin position="33"/>
        <end position="50"/>
    </location>
</feature>
<feature type="strand" evidence="6">
    <location>
        <begin position="57"/>
        <end position="60"/>
    </location>
</feature>
<feature type="strand" evidence="5">
    <location>
        <begin position="63"/>
        <end position="65"/>
    </location>
</feature>
<feature type="strand" evidence="4">
    <location>
        <begin position="67"/>
        <end position="69"/>
    </location>
</feature>
<feature type="strand" evidence="5">
    <location>
        <begin position="80"/>
        <end position="82"/>
    </location>
</feature>
<feature type="helix" evidence="6">
    <location>
        <begin position="86"/>
        <end position="109"/>
    </location>
</feature>
<reference key="1">
    <citation type="journal article" date="1989" name="Mol. Gen. Genet.">
        <title>Isolation and characterization of cDNA clones encoding photosystem I subunits with molecular masses 11.0, 10.0 and 8.4 kDa from Chlamydomonas reinhardtii.</title>
        <authorList>
            <person name="Franzen L.-G."/>
            <person name="Frank G."/>
            <person name="Zuber H."/>
            <person name="Rochaix J.-D."/>
        </authorList>
    </citation>
    <scope>NUCLEOTIDE SEQUENCE [MRNA]</scope>
    <source>
        <strain>137c / CC-125</strain>
    </source>
</reference>
<evidence type="ECO:0000250" key="1"/>
<evidence type="ECO:0000255" key="2"/>
<evidence type="ECO:0000305" key="3"/>
<evidence type="ECO:0007829" key="4">
    <source>
        <dbReference type="PDB" id="7BGI"/>
    </source>
</evidence>
<evidence type="ECO:0007829" key="5">
    <source>
        <dbReference type="PDB" id="7DZ7"/>
    </source>
</evidence>
<evidence type="ECO:0007829" key="6">
    <source>
        <dbReference type="PDB" id="7R3K"/>
    </source>
</evidence>
<comment type="subcellular location">
    <subcellularLocation>
        <location evidence="1">Plastid</location>
        <location evidence="1">Chloroplast thylakoid membrane</location>
        <topology evidence="1">Multi-pass membrane protein</topology>
    </subcellularLocation>
</comment>
<comment type="similarity">
    <text evidence="3">Belongs to the PsaG/PsaK family.</text>
</comment>
<gene>
    <name type="primary">PSAK</name>
</gene>